<evidence type="ECO:0000255" key="1">
    <source>
        <dbReference type="HAMAP-Rule" id="MF_00639"/>
    </source>
</evidence>
<gene>
    <name evidence="1" type="primary">murD</name>
    <name type="ordered locus">Athe_0776</name>
</gene>
<dbReference type="EC" id="6.3.2.9" evidence="1"/>
<dbReference type="EMBL" id="CP001393">
    <property type="protein sequence ID" value="ACM59891.1"/>
    <property type="molecule type" value="Genomic_DNA"/>
</dbReference>
<dbReference type="RefSeq" id="WP_015907329.1">
    <property type="nucleotide sequence ID" value="NC_012034.1"/>
</dbReference>
<dbReference type="SMR" id="B9MQ99"/>
<dbReference type="STRING" id="521460.Athe_0776"/>
<dbReference type="GeneID" id="31772131"/>
<dbReference type="KEGG" id="ate:Athe_0776"/>
<dbReference type="eggNOG" id="COG0771">
    <property type="taxonomic scope" value="Bacteria"/>
</dbReference>
<dbReference type="HOGENOM" id="CLU_032540_0_0_9"/>
<dbReference type="UniPathway" id="UPA00219"/>
<dbReference type="Proteomes" id="UP000007723">
    <property type="component" value="Chromosome"/>
</dbReference>
<dbReference type="GO" id="GO:0005737">
    <property type="term" value="C:cytoplasm"/>
    <property type="evidence" value="ECO:0007669"/>
    <property type="project" value="UniProtKB-SubCell"/>
</dbReference>
<dbReference type="GO" id="GO:0005524">
    <property type="term" value="F:ATP binding"/>
    <property type="evidence" value="ECO:0007669"/>
    <property type="project" value="UniProtKB-UniRule"/>
</dbReference>
<dbReference type="GO" id="GO:0008764">
    <property type="term" value="F:UDP-N-acetylmuramoylalanine-D-glutamate ligase activity"/>
    <property type="evidence" value="ECO:0007669"/>
    <property type="project" value="UniProtKB-UniRule"/>
</dbReference>
<dbReference type="GO" id="GO:0051301">
    <property type="term" value="P:cell division"/>
    <property type="evidence" value="ECO:0007669"/>
    <property type="project" value="UniProtKB-KW"/>
</dbReference>
<dbReference type="GO" id="GO:0071555">
    <property type="term" value="P:cell wall organization"/>
    <property type="evidence" value="ECO:0007669"/>
    <property type="project" value="UniProtKB-KW"/>
</dbReference>
<dbReference type="GO" id="GO:0009252">
    <property type="term" value="P:peptidoglycan biosynthetic process"/>
    <property type="evidence" value="ECO:0007669"/>
    <property type="project" value="UniProtKB-UniRule"/>
</dbReference>
<dbReference type="GO" id="GO:0008360">
    <property type="term" value="P:regulation of cell shape"/>
    <property type="evidence" value="ECO:0007669"/>
    <property type="project" value="UniProtKB-KW"/>
</dbReference>
<dbReference type="Gene3D" id="3.90.190.20">
    <property type="entry name" value="Mur ligase, C-terminal domain"/>
    <property type="match status" value="1"/>
</dbReference>
<dbReference type="Gene3D" id="3.40.1190.10">
    <property type="entry name" value="Mur-like, catalytic domain"/>
    <property type="match status" value="1"/>
</dbReference>
<dbReference type="Gene3D" id="3.40.50.720">
    <property type="entry name" value="NAD(P)-binding Rossmann-like Domain"/>
    <property type="match status" value="1"/>
</dbReference>
<dbReference type="HAMAP" id="MF_00639">
    <property type="entry name" value="MurD"/>
    <property type="match status" value="1"/>
</dbReference>
<dbReference type="InterPro" id="IPR036565">
    <property type="entry name" value="Mur-like_cat_sf"/>
</dbReference>
<dbReference type="InterPro" id="IPR004101">
    <property type="entry name" value="Mur_ligase_C"/>
</dbReference>
<dbReference type="InterPro" id="IPR036615">
    <property type="entry name" value="Mur_ligase_C_dom_sf"/>
</dbReference>
<dbReference type="InterPro" id="IPR013221">
    <property type="entry name" value="Mur_ligase_cen"/>
</dbReference>
<dbReference type="InterPro" id="IPR005762">
    <property type="entry name" value="MurD"/>
</dbReference>
<dbReference type="NCBIfam" id="TIGR01087">
    <property type="entry name" value="murD"/>
    <property type="match status" value="1"/>
</dbReference>
<dbReference type="PANTHER" id="PTHR43692">
    <property type="entry name" value="UDP-N-ACETYLMURAMOYLALANINE--D-GLUTAMATE LIGASE"/>
    <property type="match status" value="1"/>
</dbReference>
<dbReference type="PANTHER" id="PTHR43692:SF1">
    <property type="entry name" value="UDP-N-ACETYLMURAMOYLALANINE--D-GLUTAMATE LIGASE"/>
    <property type="match status" value="1"/>
</dbReference>
<dbReference type="Pfam" id="PF02875">
    <property type="entry name" value="Mur_ligase_C"/>
    <property type="match status" value="1"/>
</dbReference>
<dbReference type="Pfam" id="PF08245">
    <property type="entry name" value="Mur_ligase_M"/>
    <property type="match status" value="1"/>
</dbReference>
<dbReference type="Pfam" id="PF21799">
    <property type="entry name" value="MurD-like_N"/>
    <property type="match status" value="1"/>
</dbReference>
<dbReference type="SUPFAM" id="SSF51984">
    <property type="entry name" value="MurCD N-terminal domain"/>
    <property type="match status" value="1"/>
</dbReference>
<dbReference type="SUPFAM" id="SSF53623">
    <property type="entry name" value="MurD-like peptide ligases, catalytic domain"/>
    <property type="match status" value="1"/>
</dbReference>
<dbReference type="SUPFAM" id="SSF53244">
    <property type="entry name" value="MurD-like peptide ligases, peptide-binding domain"/>
    <property type="match status" value="1"/>
</dbReference>
<comment type="function">
    <text evidence="1">Cell wall formation. Catalyzes the addition of glutamate to the nucleotide precursor UDP-N-acetylmuramoyl-L-alanine (UMA).</text>
</comment>
<comment type="catalytic activity">
    <reaction evidence="1">
        <text>UDP-N-acetyl-alpha-D-muramoyl-L-alanine + D-glutamate + ATP = UDP-N-acetyl-alpha-D-muramoyl-L-alanyl-D-glutamate + ADP + phosphate + H(+)</text>
        <dbReference type="Rhea" id="RHEA:16429"/>
        <dbReference type="ChEBI" id="CHEBI:15378"/>
        <dbReference type="ChEBI" id="CHEBI:29986"/>
        <dbReference type="ChEBI" id="CHEBI:30616"/>
        <dbReference type="ChEBI" id="CHEBI:43474"/>
        <dbReference type="ChEBI" id="CHEBI:83898"/>
        <dbReference type="ChEBI" id="CHEBI:83900"/>
        <dbReference type="ChEBI" id="CHEBI:456216"/>
        <dbReference type="EC" id="6.3.2.9"/>
    </reaction>
</comment>
<comment type="pathway">
    <text evidence="1">Cell wall biogenesis; peptidoglycan biosynthesis.</text>
</comment>
<comment type="subcellular location">
    <subcellularLocation>
        <location evidence="1">Cytoplasm</location>
    </subcellularLocation>
</comment>
<comment type="similarity">
    <text evidence="1">Belongs to the MurCDEF family.</text>
</comment>
<accession>B9MQ99</accession>
<feature type="chain" id="PRO_1000147390" description="UDP-N-acetylmuramoylalanine--D-glutamate ligase">
    <location>
        <begin position="1"/>
        <end position="457"/>
    </location>
</feature>
<feature type="binding site" evidence="1">
    <location>
        <begin position="116"/>
        <end position="122"/>
    </location>
    <ligand>
        <name>ATP</name>
        <dbReference type="ChEBI" id="CHEBI:30616"/>
    </ligand>
</feature>
<sequence>MDLKGKNVLVVGLGRSGLASARFLKKHGAFVIGFDEKAEEQFKEEKNDAQKLLDEIYYCEIPDEFIDRVQLVIVSPGVPLSKRPLVLAHKKGIEVIGEIELAYRFCKSKNIVAITGTNGKTTTTTLVGEILKKQYEDVVVCGNIGLPFIDTIETSSEDTIFVLEISSFQLETIKYFKPKIGCILNITPDHLNRHLTMENYTKAKMRIFENIDEMGYTVLNYDNNITRDLIGLAKGNVIVFSKTKTQFENVVFVENDVIYFTFEGKTQEVMKKDEIFIPGQHNLENALAAISCTLPFGIEKDTIEQVLKTFRGVEHRIEFVAEINGIKFYNDSKGTNTDAAEKALNAFENPIILIAGGYDKGESFEKFASLVAKKVKKVFLLGQTKQKIASELERIGYKNFEFVSTLKEAVRKSFECAQNGDIVLLSPACASWDMFENYEQRGRMFKEYVNELLTTGM</sequence>
<reference key="1">
    <citation type="submission" date="2009-01" db="EMBL/GenBank/DDBJ databases">
        <title>Complete sequence of chromosome of Caldicellulosiruptor becscii DSM 6725.</title>
        <authorList>
            <person name="Lucas S."/>
            <person name="Copeland A."/>
            <person name="Lapidus A."/>
            <person name="Glavina del Rio T."/>
            <person name="Tice H."/>
            <person name="Bruce D."/>
            <person name="Goodwin L."/>
            <person name="Pitluck S."/>
            <person name="Sims D."/>
            <person name="Meincke L."/>
            <person name="Brettin T."/>
            <person name="Detter J.C."/>
            <person name="Han C."/>
            <person name="Larimer F."/>
            <person name="Land M."/>
            <person name="Hauser L."/>
            <person name="Kyrpides N."/>
            <person name="Ovchinnikova G."/>
            <person name="Kataeva I."/>
            <person name="Adams M.W.W."/>
        </authorList>
    </citation>
    <scope>NUCLEOTIDE SEQUENCE [LARGE SCALE GENOMIC DNA]</scope>
    <source>
        <strain>ATCC BAA-1888 / DSM 6725 / KCTC 15123 / Z-1320</strain>
    </source>
</reference>
<organism>
    <name type="scientific">Caldicellulosiruptor bescii (strain ATCC BAA-1888 / DSM 6725 / KCTC 15123 / Z-1320)</name>
    <name type="common">Anaerocellum thermophilum</name>
    <dbReference type="NCBI Taxonomy" id="521460"/>
    <lineage>
        <taxon>Bacteria</taxon>
        <taxon>Bacillati</taxon>
        <taxon>Bacillota</taxon>
        <taxon>Bacillota incertae sedis</taxon>
        <taxon>Caldicellulosiruptorales</taxon>
        <taxon>Caldicellulosiruptoraceae</taxon>
        <taxon>Caldicellulosiruptor</taxon>
    </lineage>
</organism>
<keyword id="KW-0067">ATP-binding</keyword>
<keyword id="KW-0131">Cell cycle</keyword>
<keyword id="KW-0132">Cell division</keyword>
<keyword id="KW-0133">Cell shape</keyword>
<keyword id="KW-0961">Cell wall biogenesis/degradation</keyword>
<keyword id="KW-0963">Cytoplasm</keyword>
<keyword id="KW-0436">Ligase</keyword>
<keyword id="KW-0547">Nucleotide-binding</keyword>
<keyword id="KW-0573">Peptidoglycan synthesis</keyword>
<proteinExistence type="inferred from homology"/>
<name>MURD_CALBD</name>
<protein>
    <recommendedName>
        <fullName evidence="1">UDP-N-acetylmuramoylalanine--D-glutamate ligase</fullName>
        <ecNumber evidence="1">6.3.2.9</ecNumber>
    </recommendedName>
    <alternativeName>
        <fullName evidence="1">D-glutamic acid-adding enzyme</fullName>
    </alternativeName>
    <alternativeName>
        <fullName evidence="1">UDP-N-acetylmuramoyl-L-alanyl-D-glutamate synthetase</fullName>
    </alternativeName>
</protein>